<protein>
    <recommendedName>
        <fullName>Proteinaceous RNase P 1, chloroplastic/mitochondrial</fullName>
        <ecNumber evidence="1 3 4">3.1.26.5</ecNumber>
    </recommendedName>
    <alternativeName>
        <fullName>Pentatricopeptide repeat-containing protein At2g32230</fullName>
    </alternativeName>
</protein>
<organism>
    <name type="scientific">Arabidopsis thaliana</name>
    <name type="common">Mouse-ear cress</name>
    <dbReference type="NCBI Taxonomy" id="3702"/>
    <lineage>
        <taxon>Eukaryota</taxon>
        <taxon>Viridiplantae</taxon>
        <taxon>Streptophyta</taxon>
        <taxon>Embryophyta</taxon>
        <taxon>Tracheophyta</taxon>
        <taxon>Spermatophyta</taxon>
        <taxon>Magnoliopsida</taxon>
        <taxon>eudicotyledons</taxon>
        <taxon>Gunneridae</taxon>
        <taxon>Pentapetalae</taxon>
        <taxon>rosids</taxon>
        <taxon>malvids</taxon>
        <taxon>Brassicales</taxon>
        <taxon>Brassicaceae</taxon>
        <taxon>Camelineae</taxon>
        <taxon>Arabidopsis</taxon>
    </lineage>
</organism>
<accession>Q66GI4</accession>
<accession>Q8RWW5</accession>
<accession>Q9SKX7</accession>
<comment type="function">
    <text evidence="1 2 3 4">Endonuclease RNase P responsible for the 5' maturation of tRNA precursors. Preferentially cleaves at the unusual cleavage site, but also able to cleave at the classical cleavage site. Also involved in the maturation of mRNAs in mitochondria.</text>
</comment>
<comment type="catalytic activity">
    <reaction evidence="1 3 4">
        <text>Endonucleolytic cleavage of RNA, removing 5'-extranucleotides from tRNA precursor.</text>
        <dbReference type="EC" id="3.1.26.5"/>
    </reaction>
</comment>
<comment type="cofactor">
    <cofactor evidence="7">
        <name>Mg(2+)</name>
        <dbReference type="ChEBI" id="CHEBI:18420"/>
    </cofactor>
    <cofactor evidence="7">
        <name>Mn(2+)</name>
        <dbReference type="ChEBI" id="CHEBI:29035"/>
    </cofactor>
    <text evidence="7">Binds 2 Mg(2+) or Mg(2+) ions per subunit.</text>
</comment>
<comment type="subcellular location">
    <subcellularLocation>
        <location evidence="1 8">Mitochondrion</location>
    </subcellularLocation>
    <subcellularLocation>
        <location evidence="1">Plastid</location>
        <location evidence="1">Chloroplast</location>
    </subcellularLocation>
</comment>
<comment type="disruption phenotype">
    <text evidence="1">Embryo lethality when homozygous.</text>
</comment>
<comment type="similarity">
    <text evidence="6">Belongs to the PPR family. P subfamily.</text>
</comment>
<comment type="sequence caution" evidence="6">
    <conflict type="erroneous gene model prediction">
        <sequence resource="EMBL-CDS" id="AAD15382"/>
    </conflict>
</comment>
<comment type="online information" name="Pentatricopeptide repeat proteins">
    <link uri="https://ppr.plantenergy.uwa.edu.au"/>
</comment>
<name>PRRP1_ARATH</name>
<sequence length="572" mass="64877">MLRLTCFTPSFSRACCPLFAMMLKVPSVHLHHPRFSPFRFYHTSLLVKGTRDRRLILVERSRHLCTLPLAAAKQSAASPSENLSRKAKKKAIQQSPEALLKQKLDMCSKKGDVLEALRLYDEARRNGVQLSQYHYNVLLYVCSLAEAATESSPNPGLSRGFDIFKQMIVDKVVPNEATFTNGARLAVAKDDPEMAFDMVKQMKAFGIQPRLRSYGPALFGFCRKGDADKAYEVDAHMVESEVVPEEPELAALLKVSMDTKNADKVYKTLQRLRDLVRQVSKSTFDMIEEWFKSEVATKTGVKKWDVKKIRDAVVSGGGGWHGQGWLGTGKWNVKRTEMDENGVCKCCKEKLVCIDINPVETETFAASLTRLACEREVKANFNQFQEWLERHGPFDAVIDGANMGLVNQRSFSFFQLNNTVQRCQQISPSKRLPLVILHKSRVNGGPATYPKNRALLEKWKNAGALYATPPGSNDDWYWLYAAVSCKCLLVTNDEMRDHLFQLLGNSFFPRWKEKHQVRISVTREDGLKLNMPPPYSIVIQESEDGTWHVPMSVEDDLQTSRQWLCAKRSKTP</sequence>
<proteinExistence type="evidence at protein level"/>
<gene>
    <name type="primary">PRORP1</name>
    <name type="ordered locus">At2g32230</name>
    <name type="ORF">F22D22.2</name>
</gene>
<keyword id="KW-0002">3D-structure</keyword>
<keyword id="KW-0150">Chloroplast</keyword>
<keyword id="KW-0378">Hydrolase</keyword>
<keyword id="KW-0460">Magnesium</keyword>
<keyword id="KW-0464">Manganese</keyword>
<keyword id="KW-0479">Metal-binding</keyword>
<keyword id="KW-0496">Mitochondrion</keyword>
<keyword id="KW-0540">Nuclease</keyword>
<keyword id="KW-0934">Plastid</keyword>
<keyword id="KW-1185">Reference proteome</keyword>
<keyword id="KW-0677">Repeat</keyword>
<keyword id="KW-0809">Transit peptide</keyword>
<keyword id="KW-0819">tRNA processing</keyword>
<keyword id="KW-0862">Zinc</keyword>
<dbReference type="EC" id="3.1.26.5" evidence="1 3 4"/>
<dbReference type="EMBL" id="AC006223">
    <property type="protein sequence ID" value="AAD15382.1"/>
    <property type="status" value="ALT_SEQ"/>
    <property type="molecule type" value="Genomic_DNA"/>
</dbReference>
<dbReference type="EMBL" id="CP002685">
    <property type="protein sequence ID" value="AEC08652.1"/>
    <property type="molecule type" value="Genomic_DNA"/>
</dbReference>
<dbReference type="EMBL" id="CP002685">
    <property type="protein sequence ID" value="ANM62476.1"/>
    <property type="molecule type" value="Genomic_DNA"/>
</dbReference>
<dbReference type="EMBL" id="AY091059">
    <property type="protein sequence ID" value="AAM13880.1"/>
    <property type="molecule type" value="mRNA"/>
</dbReference>
<dbReference type="EMBL" id="BT015418">
    <property type="protein sequence ID" value="AAU05541.1"/>
    <property type="molecule type" value="mRNA"/>
</dbReference>
<dbReference type="PIR" id="E84730">
    <property type="entry name" value="E84730"/>
</dbReference>
<dbReference type="RefSeq" id="NP_001324632.1">
    <property type="nucleotide sequence ID" value="NM_001336377.1"/>
</dbReference>
<dbReference type="RefSeq" id="NP_850186.1">
    <property type="nucleotide sequence ID" value="NM_179855.3"/>
</dbReference>
<dbReference type="PDB" id="4G23">
    <property type="method" value="X-ray"/>
    <property type="resolution" value="1.98 A"/>
    <property type="chains" value="A=77-572"/>
</dbReference>
<dbReference type="PDB" id="4G24">
    <property type="method" value="X-ray"/>
    <property type="resolution" value="1.95 A"/>
    <property type="chains" value="A=77-572"/>
</dbReference>
<dbReference type="PDB" id="4G25">
    <property type="method" value="X-ray"/>
    <property type="resolution" value="2.00 A"/>
    <property type="chains" value="A=77-572"/>
</dbReference>
<dbReference type="PDB" id="4G26">
    <property type="method" value="X-ray"/>
    <property type="resolution" value="1.75 A"/>
    <property type="chains" value="A=77-572"/>
</dbReference>
<dbReference type="PDB" id="6BV5">
    <property type="method" value="X-ray"/>
    <property type="resolution" value="1.79 A"/>
    <property type="chains" value="A=77-572"/>
</dbReference>
<dbReference type="PDB" id="6BV6">
    <property type="method" value="X-ray"/>
    <property type="resolution" value="2.20 A"/>
    <property type="chains" value="A=77-572"/>
</dbReference>
<dbReference type="PDB" id="6BV8">
    <property type="method" value="X-ray"/>
    <property type="resolution" value="2.10 A"/>
    <property type="chains" value="A=77-572"/>
</dbReference>
<dbReference type="PDB" id="6BV9">
    <property type="method" value="X-ray"/>
    <property type="resolution" value="2.10 A"/>
    <property type="chains" value="A=77-572"/>
</dbReference>
<dbReference type="PDB" id="6LVR">
    <property type="method" value="X-ray"/>
    <property type="resolution" value="2.85 A"/>
    <property type="chains" value="A/C=84-294"/>
</dbReference>
<dbReference type="PDBsum" id="4G23"/>
<dbReference type="PDBsum" id="4G24"/>
<dbReference type="PDBsum" id="4G25"/>
<dbReference type="PDBsum" id="4G26"/>
<dbReference type="PDBsum" id="6BV5"/>
<dbReference type="PDBsum" id="6BV6"/>
<dbReference type="PDBsum" id="6BV8"/>
<dbReference type="PDBsum" id="6BV9"/>
<dbReference type="PDBsum" id="6LVR"/>
<dbReference type="SMR" id="Q66GI4"/>
<dbReference type="FunCoup" id="Q66GI4">
    <property type="interactions" value="3198"/>
</dbReference>
<dbReference type="STRING" id="3702.Q66GI4"/>
<dbReference type="PaxDb" id="3702-AT2G32230.1"/>
<dbReference type="ProteomicsDB" id="226475"/>
<dbReference type="EnsemblPlants" id="AT2G32230.1">
    <property type="protein sequence ID" value="AT2G32230.1"/>
    <property type="gene ID" value="AT2G32230"/>
</dbReference>
<dbReference type="EnsemblPlants" id="AT2G32230.2">
    <property type="protein sequence ID" value="AT2G32230.2"/>
    <property type="gene ID" value="AT2G32230"/>
</dbReference>
<dbReference type="GeneID" id="817782"/>
<dbReference type="Gramene" id="AT2G32230.1">
    <property type="protein sequence ID" value="AT2G32230.1"/>
    <property type="gene ID" value="AT2G32230"/>
</dbReference>
<dbReference type="Gramene" id="AT2G32230.2">
    <property type="protein sequence ID" value="AT2G32230.2"/>
    <property type="gene ID" value="AT2G32230"/>
</dbReference>
<dbReference type="KEGG" id="ath:AT2G32230"/>
<dbReference type="Araport" id="AT2G32230"/>
<dbReference type="TAIR" id="AT2G32230">
    <property type="gene designation" value="PRORP1"/>
</dbReference>
<dbReference type="eggNOG" id="KOG1347">
    <property type="taxonomic scope" value="Eukaryota"/>
</dbReference>
<dbReference type="HOGENOM" id="CLU_014066_2_0_1"/>
<dbReference type="InParanoid" id="Q66GI4"/>
<dbReference type="OMA" id="CIDINPV"/>
<dbReference type="OrthoDB" id="46913at2759"/>
<dbReference type="PhylomeDB" id="Q66GI4"/>
<dbReference type="BRENDA" id="3.1.26.5">
    <property type="organism ID" value="399"/>
</dbReference>
<dbReference type="EvolutionaryTrace" id="Q66GI4"/>
<dbReference type="PRO" id="PR:Q66GI4"/>
<dbReference type="Proteomes" id="UP000006548">
    <property type="component" value="Chromosome 2"/>
</dbReference>
<dbReference type="ExpressionAtlas" id="Q66GI4">
    <property type="expression patterns" value="baseline and differential"/>
</dbReference>
<dbReference type="GO" id="GO:0009507">
    <property type="term" value="C:chloroplast"/>
    <property type="evidence" value="ECO:0000314"/>
    <property type="project" value="TAIR"/>
</dbReference>
<dbReference type="GO" id="GO:0005739">
    <property type="term" value="C:mitochondrion"/>
    <property type="evidence" value="ECO:0000314"/>
    <property type="project" value="TAIR"/>
</dbReference>
<dbReference type="GO" id="GO:0046872">
    <property type="term" value="F:metal ion binding"/>
    <property type="evidence" value="ECO:0007669"/>
    <property type="project" value="UniProtKB-KW"/>
</dbReference>
<dbReference type="GO" id="GO:0004526">
    <property type="term" value="F:ribonuclease P activity"/>
    <property type="evidence" value="ECO:0000314"/>
    <property type="project" value="TAIR"/>
</dbReference>
<dbReference type="GO" id="GO:0001682">
    <property type="term" value="P:tRNA 5'-leader removal"/>
    <property type="evidence" value="ECO:0000315"/>
    <property type="project" value="TAIR"/>
</dbReference>
<dbReference type="GO" id="GO:0008033">
    <property type="term" value="P:tRNA processing"/>
    <property type="evidence" value="ECO:0000314"/>
    <property type="project" value="TAIR"/>
</dbReference>
<dbReference type="CDD" id="cd18671">
    <property type="entry name" value="PIN_PRORP-Zc3h12a-like"/>
    <property type="match status" value="1"/>
</dbReference>
<dbReference type="FunFam" id="1.25.40.10:FF:000339">
    <property type="entry name" value="Proteinaceous RNase P 1, chloroplastic/mitochondrial"/>
    <property type="match status" value="1"/>
</dbReference>
<dbReference type="FunFam" id="3.40.50.11980:FF:000002">
    <property type="entry name" value="Proteinaceous RNase P 2"/>
    <property type="match status" value="1"/>
</dbReference>
<dbReference type="Gene3D" id="3.40.50.11980">
    <property type="match status" value="1"/>
</dbReference>
<dbReference type="Gene3D" id="1.25.40.10">
    <property type="entry name" value="Tetratricopeptide repeat domain"/>
    <property type="match status" value="1"/>
</dbReference>
<dbReference type="InterPro" id="IPR002885">
    <property type="entry name" value="Pentatricopeptide_rpt"/>
</dbReference>
<dbReference type="InterPro" id="IPR033443">
    <property type="entry name" value="PROP1-like_PPR_dom"/>
</dbReference>
<dbReference type="InterPro" id="IPR031595">
    <property type="entry name" value="PRORP_C"/>
</dbReference>
<dbReference type="InterPro" id="IPR011990">
    <property type="entry name" value="TPR-like_helical_dom_sf"/>
</dbReference>
<dbReference type="PANTHER" id="PTHR13547">
    <property type="match status" value="1"/>
</dbReference>
<dbReference type="PANTHER" id="PTHR13547:SF1">
    <property type="entry name" value="MITOCHONDRIAL RIBONUCLEASE P CATALYTIC SUBUNIT"/>
    <property type="match status" value="1"/>
</dbReference>
<dbReference type="Pfam" id="PF17177">
    <property type="entry name" value="PPR_long"/>
    <property type="match status" value="1"/>
</dbReference>
<dbReference type="Pfam" id="PF16953">
    <property type="entry name" value="PRORP"/>
    <property type="match status" value="1"/>
</dbReference>
<dbReference type="PROSITE" id="PS51375">
    <property type="entry name" value="PPR"/>
    <property type="match status" value="3"/>
</dbReference>
<evidence type="ECO:0000269" key="1">
    <source>
    </source>
</evidence>
<evidence type="ECO:0000269" key="2">
    <source>
    </source>
</evidence>
<evidence type="ECO:0000269" key="3">
    <source>
    </source>
</evidence>
<evidence type="ECO:0000269" key="4">
    <source>
    </source>
</evidence>
<evidence type="ECO:0000269" key="5">
    <source>
    </source>
</evidence>
<evidence type="ECO:0000305" key="6"/>
<evidence type="ECO:0000305" key="7">
    <source>
    </source>
</evidence>
<evidence type="ECO:0000305" key="8">
    <source>
    </source>
</evidence>
<evidence type="ECO:0007744" key="9">
    <source>
        <dbReference type="PDB" id="4G23"/>
    </source>
</evidence>
<evidence type="ECO:0007744" key="10">
    <source>
        <dbReference type="PDB" id="4G24"/>
    </source>
</evidence>
<evidence type="ECO:0007744" key="11">
    <source>
        <dbReference type="PDB" id="4G25"/>
    </source>
</evidence>
<evidence type="ECO:0007744" key="12">
    <source>
        <dbReference type="PDB" id="4G26"/>
    </source>
</evidence>
<evidence type="ECO:0007829" key="13">
    <source>
        <dbReference type="PDB" id="4G26"/>
    </source>
</evidence>
<evidence type="ECO:0007829" key="14">
    <source>
        <dbReference type="PDB" id="6BV5"/>
    </source>
</evidence>
<reference key="1">
    <citation type="journal article" date="1999" name="Nature">
        <title>Sequence and analysis of chromosome 2 of the plant Arabidopsis thaliana.</title>
        <authorList>
            <person name="Lin X."/>
            <person name="Kaul S."/>
            <person name="Rounsley S.D."/>
            <person name="Shea T.P."/>
            <person name="Benito M.-I."/>
            <person name="Town C.D."/>
            <person name="Fujii C.Y."/>
            <person name="Mason T.M."/>
            <person name="Bowman C.L."/>
            <person name="Barnstead M.E."/>
            <person name="Feldblyum T.V."/>
            <person name="Buell C.R."/>
            <person name="Ketchum K.A."/>
            <person name="Lee J.J."/>
            <person name="Ronning C.M."/>
            <person name="Koo H.L."/>
            <person name="Moffat K.S."/>
            <person name="Cronin L.A."/>
            <person name="Shen M."/>
            <person name="Pai G."/>
            <person name="Van Aken S."/>
            <person name="Umayam L."/>
            <person name="Tallon L.J."/>
            <person name="Gill J.E."/>
            <person name="Adams M.D."/>
            <person name="Carrera A.J."/>
            <person name="Creasy T.H."/>
            <person name="Goodman H.M."/>
            <person name="Somerville C.R."/>
            <person name="Copenhaver G.P."/>
            <person name="Preuss D."/>
            <person name="Nierman W.C."/>
            <person name="White O."/>
            <person name="Eisen J.A."/>
            <person name="Salzberg S.L."/>
            <person name="Fraser C.M."/>
            <person name="Venter J.C."/>
        </authorList>
    </citation>
    <scope>NUCLEOTIDE SEQUENCE [LARGE SCALE GENOMIC DNA]</scope>
    <source>
        <strain>cv. Columbia</strain>
    </source>
</reference>
<reference key="2">
    <citation type="journal article" date="2017" name="Plant J.">
        <title>Araport11: a complete reannotation of the Arabidopsis thaliana reference genome.</title>
        <authorList>
            <person name="Cheng C.Y."/>
            <person name="Krishnakumar V."/>
            <person name="Chan A.P."/>
            <person name="Thibaud-Nissen F."/>
            <person name="Schobel S."/>
            <person name="Town C.D."/>
        </authorList>
    </citation>
    <scope>GENOME REANNOTATION</scope>
    <source>
        <strain>cv. Columbia</strain>
    </source>
</reference>
<reference key="3">
    <citation type="journal article" date="2003" name="Science">
        <title>Empirical analysis of transcriptional activity in the Arabidopsis genome.</title>
        <authorList>
            <person name="Yamada K."/>
            <person name="Lim J."/>
            <person name="Dale J.M."/>
            <person name="Chen H."/>
            <person name="Shinn P."/>
            <person name="Palm C.J."/>
            <person name="Southwick A.M."/>
            <person name="Wu H.C."/>
            <person name="Kim C.J."/>
            <person name="Nguyen M."/>
            <person name="Pham P.K."/>
            <person name="Cheuk R.F."/>
            <person name="Karlin-Newmann G."/>
            <person name="Liu S.X."/>
            <person name="Lam B."/>
            <person name="Sakano H."/>
            <person name="Wu T."/>
            <person name="Yu G."/>
            <person name="Miranda M."/>
            <person name="Quach H.L."/>
            <person name="Tripp M."/>
            <person name="Chang C.H."/>
            <person name="Lee J.M."/>
            <person name="Toriumi M.J."/>
            <person name="Chan M.M."/>
            <person name="Tang C.C."/>
            <person name="Onodera C.S."/>
            <person name="Deng J.M."/>
            <person name="Akiyama K."/>
            <person name="Ansari Y."/>
            <person name="Arakawa T."/>
            <person name="Banh J."/>
            <person name="Banno F."/>
            <person name="Bowser L."/>
            <person name="Brooks S.Y."/>
            <person name="Carninci P."/>
            <person name="Chao Q."/>
            <person name="Choy N."/>
            <person name="Enju A."/>
            <person name="Goldsmith A.D."/>
            <person name="Gurjal M."/>
            <person name="Hansen N.F."/>
            <person name="Hayashizaki Y."/>
            <person name="Johnson-Hopson C."/>
            <person name="Hsuan V.W."/>
            <person name="Iida K."/>
            <person name="Karnes M."/>
            <person name="Khan S."/>
            <person name="Koesema E."/>
            <person name="Ishida J."/>
            <person name="Jiang P.X."/>
            <person name="Jones T."/>
            <person name="Kawai J."/>
            <person name="Kamiya A."/>
            <person name="Meyers C."/>
            <person name="Nakajima M."/>
            <person name="Narusaka M."/>
            <person name="Seki M."/>
            <person name="Sakurai T."/>
            <person name="Satou M."/>
            <person name="Tamse R."/>
            <person name="Vaysberg M."/>
            <person name="Wallender E.K."/>
            <person name="Wong C."/>
            <person name="Yamamura Y."/>
            <person name="Yuan S."/>
            <person name="Shinozaki K."/>
            <person name="Davis R.W."/>
            <person name="Theologis A."/>
            <person name="Ecker J.R."/>
        </authorList>
    </citation>
    <scope>NUCLEOTIDE SEQUENCE [LARGE SCALE MRNA]</scope>
    <source>
        <strain>cv. Columbia</strain>
    </source>
</reference>
<reference key="4">
    <citation type="submission" date="2004-08" db="EMBL/GenBank/DDBJ databases">
        <title>Arabidopsis ORF clones.</title>
        <authorList>
            <person name="Cheuk R.F."/>
            <person name="Chen H."/>
            <person name="Kim C.J."/>
            <person name="Shinn P."/>
            <person name="Ecker J.R."/>
        </authorList>
    </citation>
    <scope>NUCLEOTIDE SEQUENCE [LARGE SCALE MRNA]</scope>
    <source>
        <strain>cv. Columbia</strain>
    </source>
</reference>
<reference key="5">
    <citation type="journal article" date="2004" name="Plant Cell">
        <title>Genome-wide analysis of Arabidopsis pentatricopeptide repeat proteins reveals their essential role in organelle biogenesis.</title>
        <authorList>
            <person name="Lurin C."/>
            <person name="Andres C."/>
            <person name="Aubourg S."/>
            <person name="Bellaoui M."/>
            <person name="Bitton F."/>
            <person name="Bruyere C."/>
            <person name="Caboche M."/>
            <person name="Debast C."/>
            <person name="Gualberto J."/>
            <person name="Hoffmann B."/>
            <person name="Lecharny A."/>
            <person name="Le Ret M."/>
            <person name="Martin-Magniette M.-L."/>
            <person name="Mireau H."/>
            <person name="Peeters N."/>
            <person name="Renou J.-P."/>
            <person name="Szurek B."/>
            <person name="Taconnat L."/>
            <person name="Small I."/>
        </authorList>
    </citation>
    <scope>GENE FAMILY</scope>
</reference>
<reference key="6">
    <citation type="journal article" date="2010" name="Nat. Struct. Mol. Biol.">
        <title>A single Arabidopsis organellar protein has RNase P activity.</title>
        <authorList>
            <person name="Gobert A."/>
            <person name="Gutmann B."/>
            <person name="Taschner A."/>
            <person name="Goessringer M."/>
            <person name="Holzmann J."/>
            <person name="Hartmann R.K."/>
            <person name="Rossmanith W."/>
            <person name="Giege P."/>
        </authorList>
    </citation>
    <scope>FUNCTION</scope>
    <scope>CATALYTIC ACTIVITY</scope>
    <scope>SUBCELLULAR LOCATION</scope>
    <scope>DISRUPTION PHENOTYPE</scope>
    <scope>MUTAGENESIS OF 474-ASP-ASP-475</scope>
</reference>
<reference key="7">
    <citation type="journal article" date="2010" name="Nucleic Acids Res.">
        <title>Plant mitochondria use two pathways for the biogenesis of tRNAHis.</title>
        <authorList>
            <person name="Placido A."/>
            <person name="Sieber F."/>
            <person name="Gobert A."/>
            <person name="Gallerani R."/>
            <person name="Giege P."/>
            <person name="Marechal-Drouard L."/>
        </authorList>
    </citation>
    <scope>FUNCTION</scope>
</reference>
<reference key="8">
    <citation type="journal article" date="2012" name="Genes Dev.">
        <title>PRORP proteins support RNase P activity in both organelles and the nucleus in Arabidopsis.</title>
        <authorList>
            <person name="Gutmann B."/>
            <person name="Gobert A."/>
            <person name="Giege P."/>
        </authorList>
    </citation>
    <scope>FUNCTION</scope>
    <scope>CATALYTIC ACTIVITY</scope>
</reference>
<reference key="9">
    <citation type="journal article" date="2015" name="J. Exp. Bot.">
        <title>Identification of cleavage sites and substrate proteins for two mitochondrial intermediate peptidases in Arabidopsis thaliana.</title>
        <authorList>
            <person name="Carrie C."/>
            <person name="Venne A.S."/>
            <person name="Zahedi R.P."/>
            <person name="Soll J."/>
        </authorList>
    </citation>
    <scope>IDENTIFICATION BY MASS SPECTROMETRY</scope>
    <scope>CLEAVAGE OF TRANSIT PEPTIDE AFTER ALA-70</scope>
</reference>
<reference evidence="9 10 11 12" key="10">
    <citation type="journal article" date="2012" name="Proc. Natl. Acad. Sci. U.S.A.">
        <title>Mitochondrial ribonuclease P structure provides insight into the evolution of catalytic strategies for precursor-tRNA 5' processing.</title>
        <authorList>
            <person name="Howard M.J."/>
            <person name="Lim W.H."/>
            <person name="Fierke C.A."/>
            <person name="Koutmos M."/>
        </authorList>
    </citation>
    <scope>X-RAY CRYSTALLOGRAPHY (1.75 ANGSTROMS) OF 77-572 IN COMPLEX WITH MANGANESE AND ZINC</scope>
    <scope>FUNCTION</scope>
    <scope>CATALYTIC ACTIVITY</scope>
    <scope>COFACTOR</scope>
    <scope>MUTAGENESIS OF ASP-399; ASP-474; ASP-475 AND ASP-493</scope>
</reference>
<feature type="transit peptide" description="Chloroplast and mitochondrion" evidence="5">
    <location>
        <begin position="1"/>
        <end position="70"/>
    </location>
</feature>
<feature type="chain" id="PRO_0000356038" description="Proteinaceous RNase P 1, chloroplastic/mitochondrial">
    <location>
        <begin position="71"/>
        <end position="572"/>
    </location>
</feature>
<feature type="repeat" description="PPR 1">
    <location>
        <begin position="96"/>
        <end position="130"/>
    </location>
</feature>
<feature type="repeat" description="PPR 2">
    <location>
        <begin position="136"/>
        <end position="174"/>
    </location>
</feature>
<feature type="repeat" description="PPR 3">
    <location>
        <begin position="175"/>
        <end position="209"/>
    </location>
</feature>
<feature type="repeat" description="PPR 4">
    <location>
        <begin position="210"/>
        <end position="244"/>
    </location>
</feature>
<feature type="domain" description="PRORP">
    <location>
        <begin position="338"/>
        <end position="565"/>
    </location>
</feature>
<feature type="binding site" evidence="4 9 10 11 12">
    <location>
        <position position="344"/>
    </location>
    <ligand>
        <name>Zn(2+)</name>
        <dbReference type="ChEBI" id="CHEBI:29105"/>
    </ligand>
</feature>
<feature type="binding site" evidence="4 9 10 11 12">
    <location>
        <position position="347"/>
    </location>
    <ligand>
        <name>Zn(2+)</name>
        <dbReference type="ChEBI" id="CHEBI:29105"/>
    </ligand>
</feature>
<feature type="binding site" evidence="7">
    <location>
        <position position="399"/>
    </location>
    <ligand>
        <name>Mn(2+)</name>
        <dbReference type="ChEBI" id="CHEBI:29035"/>
        <label>1</label>
        <note>catalytic</note>
    </ligand>
</feature>
<feature type="binding site" evidence="7">
    <location>
        <position position="474"/>
    </location>
    <ligand>
        <name>Mn(2+)</name>
        <dbReference type="ChEBI" id="CHEBI:29035"/>
        <label>1</label>
        <note>catalytic</note>
    </ligand>
</feature>
<feature type="binding site" evidence="4 10">
    <location>
        <position position="475"/>
    </location>
    <ligand>
        <name>Mn(2+)</name>
        <dbReference type="ChEBI" id="CHEBI:29035"/>
        <label>2</label>
        <note>catalytic</note>
    </ligand>
</feature>
<feature type="binding site" evidence="4 10">
    <location>
        <position position="493"/>
    </location>
    <ligand>
        <name>Mn(2+)</name>
        <dbReference type="ChEBI" id="CHEBI:29035"/>
        <label>2</label>
        <note>catalytic</note>
    </ligand>
</feature>
<feature type="binding site" evidence="4 9 10 11 12">
    <location>
        <position position="548"/>
    </location>
    <ligand>
        <name>Zn(2+)</name>
        <dbReference type="ChEBI" id="CHEBI:29105"/>
    </ligand>
</feature>
<feature type="binding site" evidence="4 9 10 11 12">
    <location>
        <position position="565"/>
    </location>
    <ligand>
        <name>Zn(2+)</name>
        <dbReference type="ChEBI" id="CHEBI:29105"/>
    </ligand>
</feature>
<feature type="mutagenesis site" description="Abolishes ribonuclease activity." evidence="4">
    <original>D</original>
    <variation>N</variation>
    <location>
        <position position="399"/>
    </location>
</feature>
<feature type="mutagenesis site" description="Loss of activity." evidence="1">
    <original>DD</original>
    <variation>AA</variation>
    <location>
        <begin position="474"/>
        <end position="475"/>
    </location>
</feature>
<feature type="mutagenesis site" description="Abolishes ribonuclease activity." evidence="4">
    <original>D</original>
    <variation>N</variation>
    <location>
        <position position="474"/>
    </location>
</feature>
<feature type="mutagenesis site" description="Abolishes ribonuclease activity." evidence="4">
    <original>D</original>
    <variation>N</variation>
    <location>
        <position position="475"/>
    </location>
</feature>
<feature type="mutagenesis site" description="Abolishes ribonuclease activity." evidence="4">
    <original>D</original>
    <variation>N</variation>
    <location>
        <position position="493"/>
    </location>
</feature>
<feature type="sequence conflict" description="In Ref. 3; AAM13880." evidence="6" ref="3">
    <original>A</original>
    <variation>V</variation>
    <location>
        <position position="250"/>
    </location>
</feature>
<feature type="helix" evidence="13">
    <location>
        <begin position="96"/>
        <end position="106"/>
    </location>
</feature>
<feature type="turn" evidence="13">
    <location>
        <begin position="107"/>
        <end position="109"/>
    </location>
</feature>
<feature type="helix" evidence="13">
    <location>
        <begin position="113"/>
        <end position="126"/>
    </location>
</feature>
<feature type="helix" evidence="13">
    <location>
        <begin position="132"/>
        <end position="142"/>
    </location>
</feature>
<feature type="strand" evidence="13">
    <location>
        <begin position="149"/>
        <end position="152"/>
    </location>
</feature>
<feature type="helix" evidence="13">
    <location>
        <begin position="155"/>
        <end position="169"/>
    </location>
</feature>
<feature type="helix" evidence="13">
    <location>
        <begin position="176"/>
        <end position="189"/>
    </location>
</feature>
<feature type="helix" evidence="13">
    <location>
        <begin position="192"/>
        <end position="204"/>
    </location>
</feature>
<feature type="helix" evidence="13">
    <location>
        <begin position="211"/>
        <end position="223"/>
    </location>
</feature>
<feature type="helix" evidence="13">
    <location>
        <begin position="227"/>
        <end position="239"/>
    </location>
</feature>
<feature type="helix" evidence="13">
    <location>
        <begin position="246"/>
        <end position="258"/>
    </location>
</feature>
<feature type="helix" evidence="13">
    <location>
        <begin position="262"/>
        <end position="275"/>
    </location>
</feature>
<feature type="strand" evidence="13">
    <location>
        <begin position="277"/>
        <end position="279"/>
    </location>
</feature>
<feature type="helix" evidence="13">
    <location>
        <begin position="281"/>
        <end position="292"/>
    </location>
</feature>
<feature type="helix" evidence="13">
    <location>
        <begin position="294"/>
        <end position="297"/>
    </location>
</feature>
<feature type="helix" evidence="13">
    <location>
        <begin position="306"/>
        <end position="316"/>
    </location>
</feature>
<feature type="strand" evidence="14">
    <location>
        <begin position="317"/>
        <end position="319"/>
    </location>
</feature>
<feature type="strand" evidence="13">
    <location>
        <begin position="331"/>
        <end position="336"/>
    </location>
</feature>
<feature type="strand" evidence="13">
    <location>
        <begin position="342"/>
        <end position="344"/>
    </location>
</feature>
<feature type="turn" evidence="13">
    <location>
        <begin position="345"/>
        <end position="347"/>
    </location>
</feature>
<feature type="helix" evidence="13">
    <location>
        <begin position="358"/>
        <end position="375"/>
    </location>
</feature>
<feature type="helix" evidence="13">
    <location>
        <begin position="378"/>
        <end position="389"/>
    </location>
</feature>
<feature type="strand" evidence="13">
    <location>
        <begin position="395"/>
        <end position="399"/>
    </location>
</feature>
<feature type="helix" evidence="13">
    <location>
        <begin position="400"/>
        <end position="405"/>
    </location>
</feature>
<feature type="helix" evidence="13">
    <location>
        <begin position="413"/>
        <end position="426"/>
    </location>
</feature>
<feature type="strand" evidence="13">
    <location>
        <begin position="434"/>
        <end position="438"/>
    </location>
</feature>
<feature type="helix" evidence="13">
    <location>
        <begin position="439"/>
        <end position="442"/>
    </location>
</feature>
<feature type="helix" evidence="13">
    <location>
        <begin position="445"/>
        <end position="447"/>
    </location>
</feature>
<feature type="helix" evidence="13">
    <location>
        <begin position="450"/>
        <end position="461"/>
    </location>
</feature>
<feature type="strand" evidence="13">
    <location>
        <begin position="465"/>
        <end position="468"/>
    </location>
</feature>
<feature type="helix" evidence="13">
    <location>
        <begin position="474"/>
        <end position="485"/>
    </location>
</feature>
<feature type="strand" evidence="13">
    <location>
        <begin position="488"/>
        <end position="490"/>
    </location>
</feature>
<feature type="helix" evidence="13">
    <location>
        <begin position="498"/>
        <end position="503"/>
    </location>
</feature>
<feature type="turn" evidence="13">
    <location>
        <begin position="504"/>
        <end position="506"/>
    </location>
</feature>
<feature type="helix" evidence="13">
    <location>
        <begin position="507"/>
        <end position="515"/>
    </location>
</feature>
<feature type="strand" evidence="13">
    <location>
        <begin position="516"/>
        <end position="522"/>
    </location>
</feature>
<feature type="turn" evidence="13">
    <location>
        <begin position="523"/>
        <end position="525"/>
    </location>
</feature>
<feature type="strand" evidence="13">
    <location>
        <begin position="526"/>
        <end position="530"/>
    </location>
</feature>
<feature type="strand" evidence="13">
    <location>
        <begin position="547"/>
        <end position="551"/>
    </location>
</feature>
<feature type="turn" evidence="13">
    <location>
        <begin position="556"/>
        <end position="558"/>
    </location>
</feature>
<feature type="strand" evidence="13">
    <location>
        <begin position="563"/>
        <end position="568"/>
    </location>
</feature>